<gene>
    <name type="primary">EAF5</name>
    <name type="ordered locus">YEL018W</name>
</gene>
<dbReference type="EMBL" id="U18530">
    <property type="protein sequence ID" value="AAB64495.1"/>
    <property type="molecule type" value="Genomic_DNA"/>
</dbReference>
<dbReference type="EMBL" id="BK006939">
    <property type="protein sequence ID" value="DAA07635.1"/>
    <property type="molecule type" value="Genomic_DNA"/>
</dbReference>
<dbReference type="PIR" id="S50441">
    <property type="entry name" value="S50441"/>
</dbReference>
<dbReference type="RefSeq" id="NP_010897.1">
    <property type="nucleotide sequence ID" value="NM_001178833.1"/>
</dbReference>
<dbReference type="PDB" id="5Y81">
    <property type="method" value="EM"/>
    <property type="resolution" value="4.70 A"/>
    <property type="chains" value="H=1-279"/>
</dbReference>
<dbReference type="PDBsum" id="5Y81"/>
<dbReference type="EMDB" id="EMD-6816"/>
<dbReference type="SMR" id="P39995"/>
<dbReference type="BioGRID" id="36712">
    <property type="interactions" value="348"/>
</dbReference>
<dbReference type="ComplexPortal" id="CPX-3155">
    <property type="entry name" value="NuA4 histone acetyltransferase complex"/>
</dbReference>
<dbReference type="ComplexPortal" id="CPX-3184">
    <property type="entry name" value="EAF5-7-3 nucleosome disassembly/reassembly complex"/>
</dbReference>
<dbReference type="DIP" id="DIP-5280N"/>
<dbReference type="FunCoup" id="P39995">
    <property type="interactions" value="149"/>
</dbReference>
<dbReference type="IntAct" id="P39995">
    <property type="interactions" value="23"/>
</dbReference>
<dbReference type="MINT" id="P39995"/>
<dbReference type="STRING" id="4932.YEL018W"/>
<dbReference type="iPTMnet" id="P39995"/>
<dbReference type="PaxDb" id="4932-YEL018W"/>
<dbReference type="PeptideAtlas" id="P39995"/>
<dbReference type="EnsemblFungi" id="YEL018W_mRNA">
    <property type="protein sequence ID" value="YEL018W"/>
    <property type="gene ID" value="YEL018W"/>
</dbReference>
<dbReference type="GeneID" id="856696"/>
<dbReference type="KEGG" id="sce:YEL018W"/>
<dbReference type="AGR" id="SGD:S000000744"/>
<dbReference type="SGD" id="S000000744">
    <property type="gene designation" value="EAF5"/>
</dbReference>
<dbReference type="VEuPathDB" id="FungiDB:YEL018W"/>
<dbReference type="eggNOG" id="ENOG502S0AH">
    <property type="taxonomic scope" value="Eukaryota"/>
</dbReference>
<dbReference type="HOGENOM" id="CLU_071344_0_0_1"/>
<dbReference type="InParanoid" id="P39995"/>
<dbReference type="OMA" id="IIEIEMI"/>
<dbReference type="OrthoDB" id="4029425at2759"/>
<dbReference type="BioCyc" id="YEAST:G3O-30143-MONOMER"/>
<dbReference type="BioGRID-ORCS" id="856696">
    <property type="hits" value="3 hits in 10 CRISPR screens"/>
</dbReference>
<dbReference type="PRO" id="PR:P39995"/>
<dbReference type="Proteomes" id="UP000002311">
    <property type="component" value="Chromosome V"/>
</dbReference>
<dbReference type="RNAct" id="P39995">
    <property type="molecule type" value="protein"/>
</dbReference>
<dbReference type="GO" id="GO:0005829">
    <property type="term" value="C:cytosol"/>
    <property type="evidence" value="ECO:0000314"/>
    <property type="project" value="SGD"/>
</dbReference>
<dbReference type="GO" id="GO:0035267">
    <property type="term" value="C:NuA4 histone acetyltransferase complex"/>
    <property type="evidence" value="ECO:0000314"/>
    <property type="project" value="SGD"/>
</dbReference>
<dbReference type="GO" id="GO:1990453">
    <property type="term" value="C:nucleosome disassembly/reassembly complex"/>
    <property type="evidence" value="ECO:0000353"/>
    <property type="project" value="ComplexPortal"/>
</dbReference>
<dbReference type="GO" id="GO:0005634">
    <property type="term" value="C:nucleus"/>
    <property type="evidence" value="ECO:0000314"/>
    <property type="project" value="SGD"/>
</dbReference>
<dbReference type="GO" id="GO:0006281">
    <property type="term" value="P:DNA repair"/>
    <property type="evidence" value="ECO:0000314"/>
    <property type="project" value="SGD"/>
</dbReference>
<dbReference type="GO" id="GO:0006335">
    <property type="term" value="P:DNA replication-dependent chromatin assembly"/>
    <property type="evidence" value="ECO:0000315"/>
    <property type="project" value="ComplexPortal"/>
</dbReference>
<dbReference type="GO" id="GO:0006351">
    <property type="term" value="P:DNA-templated transcription"/>
    <property type="evidence" value="ECO:0000303"/>
    <property type="project" value="ComplexPortal"/>
</dbReference>
<dbReference type="GO" id="GO:0006337">
    <property type="term" value="P:nucleosome disassembly"/>
    <property type="evidence" value="ECO:0000315"/>
    <property type="project" value="ComplexPortal"/>
</dbReference>
<dbReference type="GO" id="GO:0032968">
    <property type="term" value="P:positive regulation of transcription elongation by RNA polymerase II"/>
    <property type="evidence" value="ECO:0000315"/>
    <property type="project" value="ComplexPortal"/>
</dbReference>
<dbReference type="InterPro" id="IPR026226">
    <property type="entry name" value="EAF5"/>
</dbReference>
<dbReference type="PRINTS" id="PR02067">
    <property type="entry name" value="PROTEINEAF5"/>
</dbReference>
<reference key="1">
    <citation type="journal article" date="1997" name="Nature">
        <title>The nucleotide sequence of Saccharomyces cerevisiae chromosome V.</title>
        <authorList>
            <person name="Dietrich F.S."/>
            <person name="Mulligan J.T."/>
            <person name="Hennessy K.M."/>
            <person name="Yelton M.A."/>
            <person name="Allen E."/>
            <person name="Araujo R."/>
            <person name="Aviles E."/>
            <person name="Berno A."/>
            <person name="Brennan T."/>
            <person name="Carpenter J."/>
            <person name="Chen E."/>
            <person name="Cherry J.M."/>
            <person name="Chung E."/>
            <person name="Duncan M."/>
            <person name="Guzman E."/>
            <person name="Hartzell G."/>
            <person name="Hunicke-Smith S."/>
            <person name="Hyman R.W."/>
            <person name="Kayser A."/>
            <person name="Komp C."/>
            <person name="Lashkari D."/>
            <person name="Lew H."/>
            <person name="Lin D."/>
            <person name="Mosedale D."/>
            <person name="Nakahara K."/>
            <person name="Namath A."/>
            <person name="Norgren R."/>
            <person name="Oefner P."/>
            <person name="Oh C."/>
            <person name="Petel F.X."/>
            <person name="Roberts D."/>
            <person name="Sehl P."/>
            <person name="Schramm S."/>
            <person name="Shogren T."/>
            <person name="Smith V."/>
            <person name="Taylor P."/>
            <person name="Wei Y."/>
            <person name="Botstein D."/>
            <person name="Davis R.W."/>
        </authorList>
    </citation>
    <scope>NUCLEOTIDE SEQUENCE [LARGE SCALE GENOMIC DNA]</scope>
    <source>
        <strain>ATCC 204508 / S288c</strain>
    </source>
</reference>
<reference key="2">
    <citation type="journal article" date="2014" name="G3 (Bethesda)">
        <title>The reference genome sequence of Saccharomyces cerevisiae: Then and now.</title>
        <authorList>
            <person name="Engel S.R."/>
            <person name="Dietrich F.S."/>
            <person name="Fisk D.G."/>
            <person name="Binkley G."/>
            <person name="Balakrishnan R."/>
            <person name="Costanzo M.C."/>
            <person name="Dwight S.S."/>
            <person name="Hitz B.C."/>
            <person name="Karra K."/>
            <person name="Nash R.S."/>
            <person name="Weng S."/>
            <person name="Wong E.D."/>
            <person name="Lloyd P."/>
            <person name="Skrzypek M.S."/>
            <person name="Miyasato S.R."/>
            <person name="Simison M."/>
            <person name="Cherry J.M."/>
        </authorList>
    </citation>
    <scope>GENOME REANNOTATION</scope>
    <source>
        <strain>ATCC 204508 / S288c</strain>
    </source>
</reference>
<reference key="3">
    <citation type="journal article" date="2003" name="Mol. Cell">
        <title>Assigning function to yeast proteins by integration of technologies.</title>
        <authorList>
            <person name="Hazbun T.R."/>
            <person name="Malmstroem L."/>
            <person name="Anderson S."/>
            <person name="Graczyk B.J."/>
            <person name="Fox B."/>
            <person name="Riffle M."/>
            <person name="Sundin B.A."/>
            <person name="Aranda J.D."/>
            <person name="McDonald W.H."/>
            <person name="Chiu C.-H."/>
            <person name="Snydsman B.E."/>
            <person name="Bradley P."/>
            <person name="Muller E.G.D."/>
            <person name="Fields S."/>
            <person name="Baker D."/>
            <person name="Yates J.R. III"/>
            <person name="Davis T.N."/>
        </authorList>
    </citation>
    <scope>IDENTIFICATION BY MASS SPECTROMETRY</scope>
</reference>
<reference key="4">
    <citation type="journal article" date="2003" name="Nature">
        <title>Global analysis of protein localization in budding yeast.</title>
        <authorList>
            <person name="Huh W.-K."/>
            <person name="Falvo J.V."/>
            <person name="Gerke L.C."/>
            <person name="Carroll A.S."/>
            <person name="Howson R.W."/>
            <person name="Weissman J.S."/>
            <person name="O'Shea E.K."/>
        </authorList>
    </citation>
    <scope>SUBCELLULAR LOCATION [LARGE SCALE ANALYSIS]</scope>
</reference>
<reference key="5">
    <citation type="journal article" date="2003" name="Nature">
        <title>Global analysis of protein expression in yeast.</title>
        <authorList>
            <person name="Ghaemmaghami S."/>
            <person name="Huh W.-K."/>
            <person name="Bower K."/>
            <person name="Howson R.W."/>
            <person name="Belle A."/>
            <person name="Dephoure N."/>
            <person name="O'Shea E.K."/>
            <person name="Weissman J.S."/>
        </authorList>
    </citation>
    <scope>LEVEL OF PROTEIN EXPRESSION [LARGE SCALE ANALYSIS]</scope>
</reference>
<reference key="6">
    <citation type="journal article" date="2004" name="Mol. Cell. Biol.">
        <title>The Yaf9 component of the SWR1 and NuA4 complexes is required for proper gene expression, histone H4 acetylation, and Htz1 replacement near telomeres.</title>
        <authorList>
            <person name="Zhang H."/>
            <person name="Richardson D.O."/>
            <person name="Roberts D.N."/>
            <person name="Utley R.T."/>
            <person name="Erdjument-Bromage H."/>
            <person name="Tempst P."/>
            <person name="Cote J."/>
            <person name="Cairns B.R."/>
        </authorList>
    </citation>
    <scope>IDENTIFICATION IN THE NUA4 COMPLEX</scope>
    <scope>IDENTIFICATION BY MASS SPECTROMETRY</scope>
</reference>
<reference key="7">
    <citation type="journal article" date="2004" name="Proc. Natl. Acad. Sci. U.S.A.">
        <title>Regulation of chromosome stability by the histone H2A variant Htz1, the Swr1 chromatin remodeling complex, and the histone acetyltransferase NuA4.</title>
        <authorList>
            <person name="Krogan N.J."/>
            <person name="Baetz K."/>
            <person name="Keogh M.-C."/>
            <person name="Datta N."/>
            <person name="Sawa C."/>
            <person name="Kwok T.C.Y."/>
            <person name="Thompson N.J."/>
            <person name="Davey M.G."/>
            <person name="Pootoolal J."/>
            <person name="Hughes T.R."/>
            <person name="Emili A."/>
            <person name="Buratowski S."/>
            <person name="Hieter P."/>
            <person name="Greenblatt J.F."/>
        </authorList>
    </citation>
    <scope>IDENTIFICATION IN THE NUA4 COMPLEX</scope>
    <scope>IDENTIFICATION BY MASS SPECTROMETRY</scope>
</reference>
<proteinExistence type="evidence at protein level"/>
<protein>
    <recommendedName>
        <fullName>Chromatin modification-related protein EAF5</fullName>
    </recommendedName>
    <alternativeName>
        <fullName>ESA1-associated factor 5</fullName>
    </alternativeName>
</protein>
<accession>P39995</accession>
<accession>D3DLN1</accession>
<evidence type="ECO:0000256" key="1">
    <source>
        <dbReference type="SAM" id="MobiDB-lite"/>
    </source>
</evidence>
<evidence type="ECO:0000269" key="2">
    <source>
    </source>
</evidence>
<evidence type="ECO:0000269" key="3">
    <source>
    </source>
</evidence>
<evidence type="ECO:0000269" key="4">
    <source>
    </source>
</evidence>
<evidence type="ECO:0000269" key="5">
    <source>
    </source>
</evidence>
<evidence type="ECO:0000305" key="6"/>
<keyword id="KW-0002">3D-structure</keyword>
<keyword id="KW-0156">Chromatin regulator</keyword>
<keyword id="KW-0227">DNA damage</keyword>
<keyword id="KW-0234">DNA repair</keyword>
<keyword id="KW-0539">Nucleus</keyword>
<keyword id="KW-1185">Reference proteome</keyword>
<keyword id="KW-0804">Transcription</keyword>
<keyword id="KW-0805">Transcription regulation</keyword>
<name>EAF5_YEAST</name>
<organism>
    <name type="scientific">Saccharomyces cerevisiae (strain ATCC 204508 / S288c)</name>
    <name type="common">Baker's yeast</name>
    <dbReference type="NCBI Taxonomy" id="559292"/>
    <lineage>
        <taxon>Eukaryota</taxon>
        <taxon>Fungi</taxon>
        <taxon>Dikarya</taxon>
        <taxon>Ascomycota</taxon>
        <taxon>Saccharomycotina</taxon>
        <taxon>Saccharomycetes</taxon>
        <taxon>Saccharomycetales</taxon>
        <taxon>Saccharomycetaceae</taxon>
        <taxon>Saccharomyces</taxon>
    </lineage>
</organism>
<comment type="function">
    <text>Component of the NuA4 histone acetyltransferase complex which is involved in transcriptional activation of selected genes principally by acetylation of nucleosomal histone H4 and H2A. The NuA4 complex is also involved in DNA repair.</text>
</comment>
<comment type="subunit">
    <text evidence="4 5">Component of the NuA4 histone acetyltransferase complex composed of at least ACT1, ARP4, YAF9, VID21, SWC4, EAF3, EAF5, EAF6, EAF7, EPL1, ESA1, TRA1 and YNG2.</text>
</comment>
<comment type="interaction">
    <interactant intactId="EBI-22312">
        <id>P39995</id>
    </interactant>
    <interactant intactId="EBI-6281">
        <id>Q12432</id>
        <label>EAF3</label>
    </interactant>
    <organismsDiffer>false</organismsDiffer>
    <experiments>12</experiments>
</comment>
<comment type="subcellular location">
    <subcellularLocation>
        <location evidence="2">Nucleus</location>
    </subcellularLocation>
</comment>
<comment type="miscellaneous">
    <text evidence="3">Present with 937 molecules/cell in log phase SD medium.</text>
</comment>
<comment type="similarity">
    <text evidence="6">Belongs to the EAF5 family.</text>
</comment>
<feature type="chain" id="PRO_0000086892" description="Chromatin modification-related protein EAF5">
    <location>
        <begin position="1"/>
        <end position="279"/>
    </location>
</feature>
<feature type="region of interest" description="Disordered" evidence="1">
    <location>
        <begin position="147"/>
        <end position="179"/>
    </location>
</feature>
<feature type="compositionally biased region" description="Low complexity" evidence="1">
    <location>
        <begin position="154"/>
        <end position="170"/>
    </location>
</feature>
<sequence>MDKEVSELVVLQLIHTLISNKNEELVRNGGGINMIGNNLRISLVKLTNEIQNNLLINELTNLRRQSNVANGNRKLGINDILTIVKNLFPEYRTTLNDGQLSLHGLEMHDIEKLLDEKYDRFKKTQVEQIRMMEDEILKNGIKTGASQLQPHANAGKSGSAGTSATITTTTPHMAHSMDPKREKLLKLYRDTVLNKLESKTGNFQKLFKSPDGSIIKNEINYEDIKNETPGSVHELQLILQKSITDGVMRKVIGTDDWKLARQVQFELDDTVQFMRRALE</sequence>